<evidence type="ECO:0000250" key="1"/>
<evidence type="ECO:0000255" key="2">
    <source>
        <dbReference type="PROSITE-ProRule" id="PRU00690"/>
    </source>
</evidence>
<evidence type="ECO:0000256" key="3">
    <source>
        <dbReference type="SAM" id="MobiDB-lite"/>
    </source>
</evidence>
<evidence type="ECO:0000305" key="4"/>
<comment type="function">
    <text evidence="1">Required for pre-18S rRNA processing. May bind microtubules (By similarity).</text>
</comment>
<comment type="subcellular location">
    <subcellularLocation>
        <location evidence="1">Nucleus</location>
        <location evidence="1">Nucleolus</location>
    </subcellularLocation>
</comment>
<comment type="similarity">
    <text evidence="4">Belongs to the NOP5/NOP56 family.</text>
</comment>
<reference key="1">
    <citation type="journal article" date="2004" name="Science">
        <title>The Ashbya gossypii genome as a tool for mapping the ancient Saccharomyces cerevisiae genome.</title>
        <authorList>
            <person name="Dietrich F.S."/>
            <person name="Voegeli S."/>
            <person name="Brachat S."/>
            <person name="Lerch A."/>
            <person name="Gates K."/>
            <person name="Steiner S."/>
            <person name="Mohr C."/>
            <person name="Poehlmann R."/>
            <person name="Luedi P."/>
            <person name="Choi S."/>
            <person name="Wing R.A."/>
            <person name="Flavier A."/>
            <person name="Gaffney T.D."/>
            <person name="Philippsen P."/>
        </authorList>
    </citation>
    <scope>NUCLEOTIDE SEQUENCE [LARGE SCALE GENOMIC DNA]</scope>
    <source>
        <strain>ATCC 10895 / CBS 109.51 / FGSC 9923 / NRRL Y-1056</strain>
    </source>
</reference>
<reference key="2">
    <citation type="journal article" date="2013" name="G3 (Bethesda)">
        <title>Genomes of Ashbya fungi isolated from insects reveal four mating-type loci, numerous translocations, lack of transposons, and distinct gene duplications.</title>
        <authorList>
            <person name="Dietrich F.S."/>
            <person name="Voegeli S."/>
            <person name="Kuo S."/>
            <person name="Philippsen P."/>
        </authorList>
    </citation>
    <scope>GENOME REANNOTATION</scope>
    <scope>SEQUENCE REVISION TO 508</scope>
    <source>
        <strain>ATCC 10895 / CBS 109.51 / FGSC 9923 / NRRL Y-1056</strain>
    </source>
</reference>
<protein>
    <recommendedName>
        <fullName>Nucleolar protein 58</fullName>
    </recommendedName>
</protein>
<gene>
    <name type="primary">NOP58</name>
    <name type="ordered locus">AFR328C</name>
</gene>
<sequence>MAYVLTETAAGYALLKASDKKIYKSSSLVQDLKSSENVLKQFKVAAFSKFASAANALEEANSVIEGKVSSQLEKLLAEAKSDKKSTLVVSETKLANAINKLGLNFNVVCDAVTLDIYRAVKEYLPELLPGMTDGDLSKMSLGLAHSIGRHKLKFSADKVDVMIIQAIALLDDLDKELNTYAMRCKEWYGWHFPELAKIVTDSVAFARIILTMGVRSNAAETDMSEILPEEIEERVKSAAEVSMGTEITQVDLDNIKSLAEQIVEFAAYREQLSNYLSSRMKAIAPNLTQLVGELVGARLIAHAGSLVSLAKAPASTIQILGAEKALFRALKTKHDTPKYGLLYHASLVGQATGKNKGKIARVLAAKAAVSLRYDALAEDRDDSGDIGLEARAKVESRLSQLEGRDLRTTPKVSRDAKKIEISEARAYNADADAATAPADSTPADSDDEEEEEKKVKKDKKDKKRKREEDAEEEDSKKSKKEKKEKKEKKEKKEKKEKKEKKEKKEKKEKKEKK</sequence>
<keyword id="KW-0539">Nucleus</keyword>
<keyword id="KW-1185">Reference proteome</keyword>
<keyword id="KW-0687">Ribonucleoprotein</keyword>
<keyword id="KW-0690">Ribosome biogenesis</keyword>
<keyword id="KW-0698">rRNA processing</keyword>
<proteinExistence type="inferred from homology"/>
<feature type="chain" id="PRO_0000350972" description="Nucleolar protein 58">
    <location>
        <begin position="1"/>
        <end position="513"/>
    </location>
</feature>
<feature type="domain" description="Nop" evidence="2">
    <location>
        <begin position="283"/>
        <end position="403"/>
    </location>
</feature>
<feature type="region of interest" description="Disordered" evidence="3">
    <location>
        <begin position="428"/>
        <end position="513"/>
    </location>
</feature>
<feature type="compositionally biased region" description="Low complexity" evidence="3">
    <location>
        <begin position="429"/>
        <end position="443"/>
    </location>
</feature>
<feature type="compositionally biased region" description="Basic residues" evidence="3">
    <location>
        <begin position="456"/>
        <end position="465"/>
    </location>
</feature>
<feature type="compositionally biased region" description="Basic residues" evidence="3">
    <location>
        <begin position="477"/>
        <end position="513"/>
    </location>
</feature>
<accession>Q753I4</accession>
<name>NOP58_EREGS</name>
<dbReference type="EMBL" id="AE016819">
    <property type="protein sequence ID" value="AAS53699.2"/>
    <property type="molecule type" value="Genomic_DNA"/>
</dbReference>
<dbReference type="RefSeq" id="NP_985875.2">
    <property type="nucleotide sequence ID" value="NM_211230.2"/>
</dbReference>
<dbReference type="SMR" id="Q753I4"/>
<dbReference type="FunCoup" id="Q753I4">
    <property type="interactions" value="1745"/>
</dbReference>
<dbReference type="STRING" id="284811.Q753I4"/>
<dbReference type="EnsemblFungi" id="AAS53699">
    <property type="protein sequence ID" value="AAS53699"/>
    <property type="gene ID" value="AGOS_AFR328C"/>
</dbReference>
<dbReference type="GeneID" id="4622140"/>
<dbReference type="KEGG" id="ago:AGOS_AFR328C"/>
<dbReference type="eggNOG" id="KOG2572">
    <property type="taxonomic scope" value="Eukaryota"/>
</dbReference>
<dbReference type="HOGENOM" id="CLU_015495_5_2_1"/>
<dbReference type="InParanoid" id="Q753I4"/>
<dbReference type="OMA" id="MGMRSNW"/>
<dbReference type="OrthoDB" id="6780543at2759"/>
<dbReference type="Proteomes" id="UP000000591">
    <property type="component" value="Chromosome VI"/>
</dbReference>
<dbReference type="GO" id="GO:0031428">
    <property type="term" value="C:box C/D methylation guide snoRNP complex"/>
    <property type="evidence" value="ECO:0000318"/>
    <property type="project" value="GO_Central"/>
</dbReference>
<dbReference type="GO" id="GO:0005730">
    <property type="term" value="C:nucleolus"/>
    <property type="evidence" value="ECO:0007669"/>
    <property type="project" value="UniProtKB-SubCell"/>
</dbReference>
<dbReference type="GO" id="GO:0032040">
    <property type="term" value="C:small-subunit processome"/>
    <property type="evidence" value="ECO:0000318"/>
    <property type="project" value="GO_Central"/>
</dbReference>
<dbReference type="GO" id="GO:0030515">
    <property type="term" value="F:snoRNA binding"/>
    <property type="evidence" value="ECO:0000318"/>
    <property type="project" value="GO_Central"/>
</dbReference>
<dbReference type="GO" id="GO:0017069">
    <property type="term" value="F:snRNA binding"/>
    <property type="evidence" value="ECO:0007669"/>
    <property type="project" value="EnsemblFungi"/>
</dbReference>
<dbReference type="GO" id="GO:0000494">
    <property type="term" value="P:box C/D sno(s)RNA 3'-end processing"/>
    <property type="evidence" value="ECO:0007669"/>
    <property type="project" value="EnsemblFungi"/>
</dbReference>
<dbReference type="GO" id="GO:0000480">
    <property type="term" value="P:endonucleolytic cleavage in 5'-ETS of tricistronic rRNA transcript (SSU-rRNA, 5.8S rRNA, LSU-rRNA)"/>
    <property type="evidence" value="ECO:0007669"/>
    <property type="project" value="EnsemblFungi"/>
</dbReference>
<dbReference type="GO" id="GO:0000447">
    <property type="term" value="P:endonucleolytic cleavage in ITS1 to separate SSU-rRNA from 5.8S rRNA and LSU-rRNA from tricistronic rRNA transcript (SSU-rRNA, 5.8S rRNA, LSU-rRNA)"/>
    <property type="evidence" value="ECO:0007669"/>
    <property type="project" value="EnsemblFungi"/>
</dbReference>
<dbReference type="GO" id="GO:0000472">
    <property type="term" value="P:endonucleolytic cleavage to generate mature 5'-end of SSU-rRNA from (SSU-rRNA, 5.8S rRNA, LSU-rRNA)"/>
    <property type="evidence" value="ECO:0007669"/>
    <property type="project" value="EnsemblFungi"/>
</dbReference>
<dbReference type="GO" id="GO:1902570">
    <property type="term" value="P:protein localization to nucleolus"/>
    <property type="evidence" value="ECO:0007669"/>
    <property type="project" value="EnsemblFungi"/>
</dbReference>
<dbReference type="GO" id="GO:0000452">
    <property type="term" value="P:snoRNA guided rRNA 2'-O-methylation"/>
    <property type="evidence" value="ECO:0007669"/>
    <property type="project" value="EnsemblFungi"/>
</dbReference>
<dbReference type="FunFam" id="1.10.246.90:FF:000003">
    <property type="entry name" value="Nucleolar protein 58"/>
    <property type="match status" value="1"/>
</dbReference>
<dbReference type="FunFam" id="1.10.287.4070:FF:000001">
    <property type="entry name" value="Probable Nucleolar protein 58"/>
    <property type="match status" value="1"/>
</dbReference>
<dbReference type="Gene3D" id="1.10.287.4070">
    <property type="match status" value="1"/>
</dbReference>
<dbReference type="Gene3D" id="1.10.246.90">
    <property type="entry name" value="Nop domain"/>
    <property type="match status" value="1"/>
</dbReference>
<dbReference type="InterPro" id="IPR045056">
    <property type="entry name" value="Nop56/Nop58"/>
</dbReference>
<dbReference type="InterPro" id="IPR012974">
    <property type="entry name" value="NOP58/56_N"/>
</dbReference>
<dbReference type="InterPro" id="IPR042239">
    <property type="entry name" value="Nop_C"/>
</dbReference>
<dbReference type="InterPro" id="IPR002687">
    <property type="entry name" value="Nop_dom"/>
</dbReference>
<dbReference type="InterPro" id="IPR036070">
    <property type="entry name" value="Nop_dom_sf"/>
</dbReference>
<dbReference type="InterPro" id="IPR012976">
    <property type="entry name" value="NOSIC"/>
</dbReference>
<dbReference type="PANTHER" id="PTHR10894">
    <property type="entry name" value="NUCLEOLAR PROTEIN 5 NUCLEOLAR PROTEIN NOP5 NOP58"/>
    <property type="match status" value="1"/>
</dbReference>
<dbReference type="PANTHER" id="PTHR10894:SF1">
    <property type="entry name" value="NUCLEOLAR PROTEIN 58"/>
    <property type="match status" value="1"/>
</dbReference>
<dbReference type="Pfam" id="PF01798">
    <property type="entry name" value="Nop"/>
    <property type="match status" value="1"/>
</dbReference>
<dbReference type="Pfam" id="PF08156">
    <property type="entry name" value="NOP5NT"/>
    <property type="match status" value="1"/>
</dbReference>
<dbReference type="SMART" id="SM00931">
    <property type="entry name" value="NOSIC"/>
    <property type="match status" value="1"/>
</dbReference>
<dbReference type="SUPFAM" id="SSF89124">
    <property type="entry name" value="Nop domain"/>
    <property type="match status" value="1"/>
</dbReference>
<dbReference type="PROSITE" id="PS51358">
    <property type="entry name" value="NOP"/>
    <property type="match status" value="1"/>
</dbReference>
<organism>
    <name type="scientific">Eremothecium gossypii (strain ATCC 10895 / CBS 109.51 / FGSC 9923 / NRRL Y-1056)</name>
    <name type="common">Yeast</name>
    <name type="synonym">Ashbya gossypii</name>
    <dbReference type="NCBI Taxonomy" id="284811"/>
    <lineage>
        <taxon>Eukaryota</taxon>
        <taxon>Fungi</taxon>
        <taxon>Dikarya</taxon>
        <taxon>Ascomycota</taxon>
        <taxon>Saccharomycotina</taxon>
        <taxon>Saccharomycetes</taxon>
        <taxon>Saccharomycetales</taxon>
        <taxon>Saccharomycetaceae</taxon>
        <taxon>Eremothecium</taxon>
    </lineage>
</organism>